<feature type="chain" id="PRO_0000050080" description="SPbeta prophage-derived stress response protein SCP1">
    <location>
        <begin position="1"/>
        <end position="104"/>
    </location>
</feature>
<dbReference type="EMBL" id="AL009126">
    <property type="protein sequence ID" value="CAB13934.1"/>
    <property type="molecule type" value="Genomic_DNA"/>
</dbReference>
<dbReference type="RefSeq" id="NP_389924.1">
    <property type="nucleotide sequence ID" value="NC_000964.3"/>
</dbReference>
<dbReference type="RefSeq" id="WP_004399509.1">
    <property type="nucleotide sequence ID" value="NZ_OZ025638.1"/>
</dbReference>
<dbReference type="SMR" id="P68575"/>
<dbReference type="FunCoup" id="P68575">
    <property type="interactions" value="22"/>
</dbReference>
<dbReference type="STRING" id="224308.BSU20420"/>
<dbReference type="jPOST" id="P68575"/>
<dbReference type="PaxDb" id="224308-BSU20420"/>
<dbReference type="EnsemblBacteria" id="CAB13934">
    <property type="protein sequence ID" value="CAB13934"/>
    <property type="gene ID" value="BSU_20420"/>
</dbReference>
<dbReference type="GeneID" id="940145"/>
<dbReference type="KEGG" id="bsu:BSU20420"/>
<dbReference type="PATRIC" id="fig|224308.179.peg.2232"/>
<dbReference type="InParanoid" id="P68575"/>
<dbReference type="OrthoDB" id="2921794at2"/>
<dbReference type="BioCyc" id="BSUB:BSU20420-MONOMER"/>
<dbReference type="Proteomes" id="UP000001570">
    <property type="component" value="Chromosome"/>
</dbReference>
<dbReference type="GO" id="GO:0005737">
    <property type="term" value="C:cytoplasm"/>
    <property type="evidence" value="ECO:0007669"/>
    <property type="project" value="UniProtKB-SubCell"/>
</dbReference>
<dbReference type="Gene3D" id="3.30.56.60">
    <property type="entry name" value="XkdW-like"/>
    <property type="match status" value="1"/>
</dbReference>
<dbReference type="InterPro" id="IPR019094">
    <property type="entry name" value="Phage_SP-beta_YorD"/>
</dbReference>
<dbReference type="InterPro" id="IPR035950">
    <property type="entry name" value="XkdW-like_sf"/>
</dbReference>
<dbReference type="Pfam" id="PF09636">
    <property type="entry name" value="XkdW"/>
    <property type="match status" value="1"/>
</dbReference>
<dbReference type="SUPFAM" id="SSF159865">
    <property type="entry name" value="XkdW-like"/>
    <property type="match status" value="1"/>
</dbReference>
<keyword id="KW-0963">Cytoplasm</keyword>
<keyword id="KW-0903">Direct protein sequencing</keyword>
<keyword id="KW-1185">Reference proteome</keyword>
<keyword id="KW-0346">Stress response</keyword>
<reference key="1">
    <citation type="journal article" date="1997" name="Nature">
        <title>The complete genome sequence of the Gram-positive bacterium Bacillus subtilis.</title>
        <authorList>
            <person name="Kunst F."/>
            <person name="Ogasawara N."/>
            <person name="Moszer I."/>
            <person name="Albertini A.M."/>
            <person name="Alloni G."/>
            <person name="Azevedo V."/>
            <person name="Bertero M.G."/>
            <person name="Bessieres P."/>
            <person name="Bolotin A."/>
            <person name="Borchert S."/>
            <person name="Borriss R."/>
            <person name="Boursier L."/>
            <person name="Brans A."/>
            <person name="Braun M."/>
            <person name="Brignell S.C."/>
            <person name="Bron S."/>
            <person name="Brouillet S."/>
            <person name="Bruschi C.V."/>
            <person name="Caldwell B."/>
            <person name="Capuano V."/>
            <person name="Carter N.M."/>
            <person name="Choi S.-K."/>
            <person name="Codani J.-J."/>
            <person name="Connerton I.F."/>
            <person name="Cummings N.J."/>
            <person name="Daniel R.A."/>
            <person name="Denizot F."/>
            <person name="Devine K.M."/>
            <person name="Duesterhoeft A."/>
            <person name="Ehrlich S.D."/>
            <person name="Emmerson P.T."/>
            <person name="Entian K.-D."/>
            <person name="Errington J."/>
            <person name="Fabret C."/>
            <person name="Ferrari E."/>
            <person name="Foulger D."/>
            <person name="Fritz C."/>
            <person name="Fujita M."/>
            <person name="Fujita Y."/>
            <person name="Fuma S."/>
            <person name="Galizzi A."/>
            <person name="Galleron N."/>
            <person name="Ghim S.-Y."/>
            <person name="Glaser P."/>
            <person name="Goffeau A."/>
            <person name="Golightly E.J."/>
            <person name="Grandi G."/>
            <person name="Guiseppi G."/>
            <person name="Guy B.J."/>
            <person name="Haga K."/>
            <person name="Haiech J."/>
            <person name="Harwood C.R."/>
            <person name="Henaut A."/>
            <person name="Hilbert H."/>
            <person name="Holsappel S."/>
            <person name="Hosono S."/>
            <person name="Hullo M.-F."/>
            <person name="Itaya M."/>
            <person name="Jones L.-M."/>
            <person name="Joris B."/>
            <person name="Karamata D."/>
            <person name="Kasahara Y."/>
            <person name="Klaerr-Blanchard M."/>
            <person name="Klein C."/>
            <person name="Kobayashi Y."/>
            <person name="Koetter P."/>
            <person name="Koningstein G."/>
            <person name="Krogh S."/>
            <person name="Kumano M."/>
            <person name="Kurita K."/>
            <person name="Lapidus A."/>
            <person name="Lardinois S."/>
            <person name="Lauber J."/>
            <person name="Lazarevic V."/>
            <person name="Lee S.-M."/>
            <person name="Levine A."/>
            <person name="Liu H."/>
            <person name="Masuda S."/>
            <person name="Mauel C."/>
            <person name="Medigue C."/>
            <person name="Medina N."/>
            <person name="Mellado R.P."/>
            <person name="Mizuno M."/>
            <person name="Moestl D."/>
            <person name="Nakai S."/>
            <person name="Noback M."/>
            <person name="Noone D."/>
            <person name="O'Reilly M."/>
            <person name="Ogawa K."/>
            <person name="Ogiwara A."/>
            <person name="Oudega B."/>
            <person name="Park S.-H."/>
            <person name="Parro V."/>
            <person name="Pohl T.M."/>
            <person name="Portetelle D."/>
            <person name="Porwollik S."/>
            <person name="Prescott A.M."/>
            <person name="Presecan E."/>
            <person name="Pujic P."/>
            <person name="Purnelle B."/>
            <person name="Rapoport G."/>
            <person name="Rey M."/>
            <person name="Reynolds S."/>
            <person name="Rieger M."/>
            <person name="Rivolta C."/>
            <person name="Rocha E."/>
            <person name="Roche B."/>
            <person name="Rose M."/>
            <person name="Sadaie Y."/>
            <person name="Sato T."/>
            <person name="Scanlan E."/>
            <person name="Schleich S."/>
            <person name="Schroeter R."/>
            <person name="Scoffone F."/>
            <person name="Sekiguchi J."/>
            <person name="Sekowska A."/>
            <person name="Seror S.J."/>
            <person name="Serror P."/>
            <person name="Shin B.-S."/>
            <person name="Soldo B."/>
            <person name="Sorokin A."/>
            <person name="Tacconi E."/>
            <person name="Takagi T."/>
            <person name="Takahashi H."/>
            <person name="Takemaru K."/>
            <person name="Takeuchi M."/>
            <person name="Tamakoshi A."/>
            <person name="Tanaka T."/>
            <person name="Terpstra P."/>
            <person name="Tognoni A."/>
            <person name="Tosato V."/>
            <person name="Uchiyama S."/>
            <person name="Vandenbol M."/>
            <person name="Vannier F."/>
            <person name="Vassarotti A."/>
            <person name="Viari A."/>
            <person name="Wambutt R."/>
            <person name="Wedler E."/>
            <person name="Wedler H."/>
            <person name="Weitzenegger T."/>
            <person name="Winters P."/>
            <person name="Wipat A."/>
            <person name="Yamamoto H."/>
            <person name="Yamane K."/>
            <person name="Yasumoto K."/>
            <person name="Yata K."/>
            <person name="Yoshida K."/>
            <person name="Yoshikawa H.-F."/>
            <person name="Zumstein E."/>
            <person name="Yoshikawa H."/>
            <person name="Danchin A."/>
        </authorList>
    </citation>
    <scope>NUCLEOTIDE SEQUENCE [LARGE SCALE GENOMIC DNA]</scope>
    <source>
        <strain>168</strain>
    </source>
</reference>
<reference key="2">
    <citation type="submission" date="1997-10" db="UniProtKB">
        <authorList>
            <person name="Graumann P.L."/>
            <person name="Schmid R."/>
            <person name="Marahiel M.A."/>
        </authorList>
    </citation>
    <scope>PROTEIN SEQUENCE OF 1-26</scope>
    <source>
        <strain>168 / JH642</strain>
    </source>
</reference>
<reference key="3">
    <citation type="journal article" date="1996" name="J. Bacteriol.">
        <title>Cold shock stress-induced proteins in Bacillus subtilis.</title>
        <authorList>
            <person name="Graumann P."/>
            <person name="Schroeder K."/>
            <person name="Schmid R."/>
            <person name="Marahiel M.A."/>
        </authorList>
    </citation>
    <scope>CHARACTERIZATION</scope>
    <source>
        <strain>168 / JH642</strain>
    </source>
</reference>
<sequence length="104" mass="12113">MEFKVGQDVSEIWNIHGSILPEVLMYMFPRSDESYDWEFVNDNGRHIFTAWRKSEPIPTLEEIEKAAIELEEKKNAPKPKTLEERVADLEKQVAYLTSKVEGTN</sequence>
<proteinExistence type="evidence at protein level"/>
<accession>P68575</accession>
<accession>O64138</accession>
<accession>P81094</accession>
<accession>P81099</accession>
<organism>
    <name type="scientific">Bacillus subtilis (strain 168)</name>
    <dbReference type="NCBI Taxonomy" id="224308"/>
    <lineage>
        <taxon>Bacteria</taxon>
        <taxon>Bacillati</taxon>
        <taxon>Bacillota</taxon>
        <taxon>Bacilli</taxon>
        <taxon>Bacillales</taxon>
        <taxon>Bacillaceae</taxon>
        <taxon>Bacillus</taxon>
    </lineage>
</organism>
<comment type="subcellular location">
    <subcellularLocation>
        <location>Cytoplasm</location>
    </subcellularLocation>
</comment>
<comment type="induction">
    <text>In response to low temperature and salt stress.</text>
</comment>
<name>SCP1_BACSU</name>
<protein>
    <recommendedName>
        <fullName>SPbeta prophage-derived stress response protein SCP1</fullName>
    </recommendedName>
</protein>
<gene>
    <name type="primary">yorD</name>
    <name type="ordered locus">BSU20420</name>
</gene>